<gene>
    <name type="primary">Nlrx1</name>
</gene>
<sequence>MRWGCHLPRTSWGSGLGRTVPLPDELRIQSSWPFKGVHHPLRPPRAFIRHHGNSADSAPPPGRHGQLFRSISATEAIQRHRRNLTEWFSRLPREERQFGPTFALDTVHVDPVIRESTPDDLLRPSTELATGHQRTQAELPPLALSQLFDPDACGRRVQTVVLYGTVGTGKSTLVRKMVLDWCYGRLPAFELLIPFSCEDLSSLGSTPASLCQLVTQRYTPLKEVLPLMNAAGSRLLFVLHGLERLNLDFRLAGTGLCSDPEEPGAPAAIMVNLLRKYMLPEASILVTTRPSAIGRIPSKYVGRYGEICGFSDTNLQKLYFQLRLNQPDCGYGAGGTGVSVTPAQRDNLIQMLSRNLEGHHQIAAACFLPSYCWLVCATLHFLHAPTSAGQTLTSIYTSFLRLNFNGETLDSTDPSNLSLMSYAARTMGKLAYEGVSSRKTYFSEEDVRGCLEAGIKTEEEFQLLQIFRRDALRFFLAPCVEPGHLGTFVFTVPAMQEYLAALYIVLGLRKTALQRVGKEVFEFVGRVGEDVSLVLGIVAKLLPLRILPLLFNLLKVVPRVFGRMVSKSREAVAQAMVLEMFREEDYYNDDVLDQMGASILGVEGPRRHPDEPPEDEVFELFPMFMSGLLSAHNRAVLAQLGCPIKNLDALENAQAIKKKLGKMGRQVLPPSELLDHLFFHYEFQNQRFSAEVLGSLRQLNLAGVRMTPLKCTVVASVLGSGRHPLDEVNLASCQLDPAGLHTLMPVLLRARKLGLQLNNLGPEACRDLRDLLLHDQCQITTLRLSNNPLTAAGVGVLMDGLAGNTSVTHLSLLHTDLGDEGLELLAAQLDRNKQLQELNVAYNGAGDTVALALAKAARKHPSLELLHLYFNELSSEGRQVLRDLGGSGEGGARVVASLTEGTAVSEYWSVILSEVQRNLNSWDPVRVQRHLKLLLRDLEDSRGATLNPWRKAQLLRVESEVKTLLEQLGGSGH</sequence>
<reference key="1">
    <citation type="journal article" date="2004" name="Genome Res.">
        <title>The status, quality, and expansion of the NIH full-length cDNA project: the Mammalian Gene Collection (MGC).</title>
        <authorList>
            <consortium name="The MGC Project Team"/>
        </authorList>
    </citation>
    <scope>NUCLEOTIDE SEQUENCE [LARGE SCALE MRNA]</scope>
    <source>
        <tissue>Liver</tissue>
    </source>
</reference>
<organism>
    <name type="scientific">Rattus norvegicus</name>
    <name type="common">Rat</name>
    <dbReference type="NCBI Taxonomy" id="10116"/>
    <lineage>
        <taxon>Eukaryota</taxon>
        <taxon>Metazoa</taxon>
        <taxon>Chordata</taxon>
        <taxon>Craniata</taxon>
        <taxon>Vertebrata</taxon>
        <taxon>Euteleostomi</taxon>
        <taxon>Mammalia</taxon>
        <taxon>Eutheria</taxon>
        <taxon>Euarchontoglires</taxon>
        <taxon>Glires</taxon>
        <taxon>Rodentia</taxon>
        <taxon>Myomorpha</taxon>
        <taxon>Muroidea</taxon>
        <taxon>Muridae</taxon>
        <taxon>Murinae</taxon>
        <taxon>Rattus</taxon>
    </lineage>
</organism>
<comment type="function">
    <text evidence="2 3">Participates in antiviral signaling. Acts as a negative regulator of MAVS-mediated antiviral responses, through the inhibition of the virus-induced RLH (RIG-like helicase)-MAVS interaction. Instead, promotes autophagy by interacting with TUFM and subsequently recruiting the autophagy-related proteins ATG5 and ATG12. Also regulates MAVS-dependent NLRP3 inflammasome activation to attenuate apoptosis. Has no inhibitory function on NF-kappa-B signaling pathway, but enhances NF-kappa-B and JUN N-terminal kinase dependent signaling through the production of reactive oxygen species (By similarity). Regulates viral mediated-inflammation and energy metabolism in a sex-dependent manner. In females, prevents uncontrolled inflammation and energy metabolism and thus, may contribute to the sex differences observed in infectious and inflammatory diseases (By similarity).</text>
</comment>
<comment type="subunit">
    <text evidence="3">Homohexamer (By similarity). Interacts with MAVS (By similarity). Interacts with TUFM (By similarity).</text>
</comment>
<comment type="subcellular location">
    <subcellularLocation>
        <location evidence="3">Mitochondrion outer membrane</location>
    </subcellularLocation>
</comment>
<comment type="domain">
    <text evidence="3">The LRRCT domain mediates homodimerization and LRRNT mediates trimerization of the dimers.</text>
</comment>
<comment type="similarity">
    <text evidence="5">Belongs to the NLRP family.</text>
</comment>
<feature type="transit peptide" description="Mitochondrion" evidence="1">
    <location>
        <begin position="1"/>
        <end position="84"/>
    </location>
</feature>
<feature type="chain" id="PRO_0000296192" description="NLR family member X1" evidence="1">
    <location>
        <begin position="85"/>
        <end position="973"/>
    </location>
</feature>
<feature type="domain" description="NACHT" evidence="4">
    <location>
        <begin position="158"/>
        <end position="481"/>
    </location>
</feature>
<feature type="domain" description="LRRNT" evidence="3">
    <location>
        <begin position="665"/>
        <end position="692"/>
    </location>
</feature>
<feature type="repeat" description="LRR 1" evidence="3">
    <location>
        <begin position="693"/>
        <end position="716"/>
    </location>
</feature>
<feature type="repeat" description="LRR 2" evidence="3">
    <location>
        <begin position="722"/>
        <end position="745"/>
    </location>
</feature>
<feature type="repeat" description="LRR 3" evidence="3">
    <location>
        <begin position="747"/>
        <end position="775"/>
    </location>
</feature>
<feature type="repeat" description="LRR 4" evidence="3">
    <location>
        <begin position="776"/>
        <end position="799"/>
    </location>
</feature>
<feature type="repeat" description="LRR 5" evidence="3">
    <location>
        <begin position="809"/>
        <end position="832"/>
    </location>
</feature>
<feature type="repeat" description="LRR 6" evidence="3">
    <location>
        <begin position="833"/>
        <end position="855"/>
    </location>
</feature>
<feature type="repeat" description="LRR 7" evidence="3">
    <location>
        <begin position="856"/>
        <end position="875"/>
    </location>
</feature>
<feature type="repeat" description="LRR 8" evidence="3">
    <location>
        <begin position="876"/>
        <end position="897"/>
    </location>
</feature>
<feature type="domain" description="LRRCT" evidence="3">
    <location>
        <begin position="904"/>
        <end position="968"/>
    </location>
</feature>
<feature type="region of interest" description="Required for interaction with MAVS" evidence="3">
    <location>
        <begin position="73"/>
        <end position="554"/>
    </location>
</feature>
<feature type="region of interest" description="Required for the repression of MAVS-induced interferon signaling" evidence="3">
    <location>
        <begin position="554"/>
        <end position="972"/>
    </location>
</feature>
<feature type="binding site" evidence="4">
    <location>
        <begin position="164"/>
        <end position="171"/>
    </location>
    <ligand>
        <name>ATP</name>
        <dbReference type="ChEBI" id="CHEBI:30616"/>
    </ligand>
</feature>
<proteinExistence type="evidence at transcript level"/>
<protein>
    <recommendedName>
        <fullName>NLR family member X1</fullName>
    </recommendedName>
</protein>
<dbReference type="EMBL" id="BC089834">
    <property type="protein sequence ID" value="AAH89834.1"/>
    <property type="molecule type" value="mRNA"/>
</dbReference>
<dbReference type="RefSeq" id="NP_001020181.1">
    <property type="nucleotide sequence ID" value="NM_001025010.1"/>
</dbReference>
<dbReference type="RefSeq" id="XP_038937350.1">
    <property type="nucleotide sequence ID" value="XM_039081422.2"/>
</dbReference>
<dbReference type="RefSeq" id="XP_038937351.1">
    <property type="nucleotide sequence ID" value="XM_039081423.2"/>
</dbReference>
<dbReference type="RefSeq" id="XP_038937352.1">
    <property type="nucleotide sequence ID" value="XM_039081424.2"/>
</dbReference>
<dbReference type="SMR" id="Q5FVQ8"/>
<dbReference type="FunCoup" id="Q5FVQ8">
    <property type="interactions" value="606"/>
</dbReference>
<dbReference type="STRING" id="10116.ENSRNOP00000071934"/>
<dbReference type="GlyGen" id="Q5FVQ8">
    <property type="glycosylation" value="1 site"/>
</dbReference>
<dbReference type="iPTMnet" id="Q5FVQ8"/>
<dbReference type="PhosphoSitePlus" id="Q5FVQ8"/>
<dbReference type="jPOST" id="Q5FVQ8"/>
<dbReference type="PaxDb" id="10116-ENSRNOP00000011620"/>
<dbReference type="Ensembl" id="ENSRNOT00000077958.2">
    <property type="protein sequence ID" value="ENSRNOP00000071934.2"/>
    <property type="gene ID" value="ENSRNOG00000052386.2"/>
</dbReference>
<dbReference type="GeneID" id="315599"/>
<dbReference type="KEGG" id="rno:315599"/>
<dbReference type="UCSC" id="RGD:1311293">
    <property type="organism name" value="rat"/>
</dbReference>
<dbReference type="AGR" id="RGD:1311293"/>
<dbReference type="CTD" id="79671"/>
<dbReference type="RGD" id="1311293">
    <property type="gene designation" value="Nlrx1"/>
</dbReference>
<dbReference type="eggNOG" id="KOG4308">
    <property type="taxonomic scope" value="Eukaryota"/>
</dbReference>
<dbReference type="GeneTree" id="ENSGT00940000159493"/>
<dbReference type="InParanoid" id="Q5FVQ8"/>
<dbReference type="OMA" id="CVEPGHR"/>
<dbReference type="Reactome" id="R-RNO-936440">
    <property type="pathway name" value="Negative regulators of DDX58/IFIH1 signaling"/>
</dbReference>
<dbReference type="Reactome" id="R-RNO-9758274">
    <property type="pathway name" value="Regulation of NF-kappa B signaling"/>
</dbReference>
<dbReference type="PRO" id="PR:Q5FVQ8"/>
<dbReference type="Proteomes" id="UP000002494">
    <property type="component" value="Chromosome 8"/>
</dbReference>
<dbReference type="GO" id="GO:0005741">
    <property type="term" value="C:mitochondrial outer membrane"/>
    <property type="evidence" value="ECO:0007669"/>
    <property type="project" value="UniProtKB-SubCell"/>
</dbReference>
<dbReference type="GO" id="GO:0005739">
    <property type="term" value="C:mitochondrion"/>
    <property type="evidence" value="ECO:0000318"/>
    <property type="project" value="GO_Central"/>
</dbReference>
<dbReference type="GO" id="GO:0005886">
    <property type="term" value="C:plasma membrane"/>
    <property type="evidence" value="ECO:0007669"/>
    <property type="project" value="Ensembl"/>
</dbReference>
<dbReference type="GO" id="GO:0005524">
    <property type="term" value="F:ATP binding"/>
    <property type="evidence" value="ECO:0007669"/>
    <property type="project" value="UniProtKB-KW"/>
</dbReference>
<dbReference type="GO" id="GO:0045087">
    <property type="term" value="P:innate immune response"/>
    <property type="evidence" value="ECO:0007669"/>
    <property type="project" value="UniProtKB-KW"/>
</dbReference>
<dbReference type="GO" id="GO:0043124">
    <property type="term" value="P:negative regulation of canonical NF-kappaB signal transduction"/>
    <property type="evidence" value="ECO:0000266"/>
    <property type="project" value="RGD"/>
</dbReference>
<dbReference type="GO" id="GO:0050728">
    <property type="term" value="P:negative regulation of inflammatory response"/>
    <property type="evidence" value="ECO:0000266"/>
    <property type="project" value="RGD"/>
</dbReference>
<dbReference type="GO" id="GO:0045824">
    <property type="term" value="P:negative regulation of innate immune response"/>
    <property type="evidence" value="ECO:0000266"/>
    <property type="project" value="RGD"/>
</dbReference>
<dbReference type="GO" id="GO:0032688">
    <property type="term" value="P:negative regulation of interferon-beta production"/>
    <property type="evidence" value="ECO:0000266"/>
    <property type="project" value="RGD"/>
</dbReference>
<dbReference type="GO" id="GO:0032715">
    <property type="term" value="P:negative regulation of interleukin-6 production"/>
    <property type="evidence" value="ECO:0000266"/>
    <property type="project" value="RGD"/>
</dbReference>
<dbReference type="GO" id="GO:0010936">
    <property type="term" value="P:negative regulation of macrophage cytokine production"/>
    <property type="evidence" value="ECO:0000266"/>
    <property type="project" value="RGD"/>
</dbReference>
<dbReference type="GO" id="GO:0039536">
    <property type="term" value="P:negative regulation of RIG-I signaling pathway"/>
    <property type="evidence" value="ECO:0000266"/>
    <property type="project" value="RGD"/>
</dbReference>
<dbReference type="FunFam" id="3.40.50.300:FF:001029">
    <property type="entry name" value="NLR family member X1"/>
    <property type="match status" value="1"/>
</dbReference>
<dbReference type="FunFam" id="3.80.10.10:FF:000149">
    <property type="entry name" value="NLR family member X1"/>
    <property type="match status" value="1"/>
</dbReference>
<dbReference type="Gene3D" id="3.40.50.300">
    <property type="entry name" value="P-loop containing nucleotide triphosphate hydrolases"/>
    <property type="match status" value="1"/>
</dbReference>
<dbReference type="Gene3D" id="3.80.10.10">
    <property type="entry name" value="Ribonuclease Inhibitor"/>
    <property type="match status" value="1"/>
</dbReference>
<dbReference type="InterPro" id="IPR001611">
    <property type="entry name" value="Leu-rich_rpt"/>
</dbReference>
<dbReference type="InterPro" id="IPR032675">
    <property type="entry name" value="LRR_dom_sf"/>
</dbReference>
<dbReference type="InterPro" id="IPR007111">
    <property type="entry name" value="NACHT_NTPase"/>
</dbReference>
<dbReference type="InterPro" id="IPR051261">
    <property type="entry name" value="NLR"/>
</dbReference>
<dbReference type="InterPro" id="IPR048900">
    <property type="entry name" value="NLRX1_C"/>
</dbReference>
<dbReference type="InterPro" id="IPR027417">
    <property type="entry name" value="P-loop_NTPase"/>
</dbReference>
<dbReference type="PANTHER" id="PTHR24106">
    <property type="entry name" value="NACHT, LRR AND CARD DOMAINS-CONTAINING"/>
    <property type="match status" value="1"/>
</dbReference>
<dbReference type="Pfam" id="PF13516">
    <property type="entry name" value="LRR_6"/>
    <property type="match status" value="1"/>
</dbReference>
<dbReference type="Pfam" id="PF05729">
    <property type="entry name" value="NACHT"/>
    <property type="match status" value="1"/>
</dbReference>
<dbReference type="Pfam" id="PF21402">
    <property type="entry name" value="NLRX1_C"/>
    <property type="match status" value="1"/>
</dbReference>
<dbReference type="SMART" id="SM00368">
    <property type="entry name" value="LRR_RI"/>
    <property type="match status" value="6"/>
</dbReference>
<dbReference type="SUPFAM" id="SSF52540">
    <property type="entry name" value="P-loop containing nucleoside triphosphate hydrolases"/>
    <property type="match status" value="1"/>
</dbReference>
<dbReference type="SUPFAM" id="SSF52047">
    <property type="entry name" value="RNI-like"/>
    <property type="match status" value="1"/>
</dbReference>
<dbReference type="PROSITE" id="PS50837">
    <property type="entry name" value="NACHT"/>
    <property type="match status" value="1"/>
</dbReference>
<accession>Q5FVQ8</accession>
<keyword id="KW-0067">ATP-binding</keyword>
<keyword id="KW-0945">Host-virus interaction</keyword>
<keyword id="KW-0391">Immunity</keyword>
<keyword id="KW-0399">Innate immunity</keyword>
<keyword id="KW-0433">Leucine-rich repeat</keyword>
<keyword id="KW-0472">Membrane</keyword>
<keyword id="KW-0496">Mitochondrion</keyword>
<keyword id="KW-1000">Mitochondrion outer membrane</keyword>
<keyword id="KW-0547">Nucleotide-binding</keyword>
<keyword id="KW-1185">Reference proteome</keyword>
<keyword id="KW-0677">Repeat</keyword>
<keyword id="KW-0809">Transit peptide</keyword>
<name>NLRX1_RAT</name>
<evidence type="ECO:0000250" key="1"/>
<evidence type="ECO:0000250" key="2">
    <source>
        <dbReference type="UniProtKB" id="Q3TL44"/>
    </source>
</evidence>
<evidence type="ECO:0000250" key="3">
    <source>
        <dbReference type="UniProtKB" id="Q86UT6"/>
    </source>
</evidence>
<evidence type="ECO:0000255" key="4">
    <source>
        <dbReference type="PROSITE-ProRule" id="PRU00136"/>
    </source>
</evidence>
<evidence type="ECO:0000305" key="5"/>